<keyword id="KW-0067">ATP-binding</keyword>
<keyword id="KW-0547">Nucleotide-binding</keyword>
<keyword id="KW-0814">Transposable element</keyword>
<evidence type="ECO:0000255" key="1"/>
<evidence type="ECO:0000305" key="2"/>
<reference key="1">
    <citation type="journal article" date="2004" name="Proc. Natl. Acad. Sci. U.S.A.">
        <title>Genomic analysis of Bacteroides fragilis reveals extensive DNA inversions regulating cell surface adaptation.</title>
        <authorList>
            <person name="Kuwahara T."/>
            <person name="Yamashita A."/>
            <person name="Hirakawa H."/>
            <person name="Nakayama H."/>
            <person name="Toh H."/>
            <person name="Okada N."/>
            <person name="Kuhara S."/>
            <person name="Hattori M."/>
            <person name="Hayashi T."/>
            <person name="Ohnishi Y."/>
        </authorList>
    </citation>
    <scope>NUCLEOTIDE SEQUENCE [LARGE SCALE GENOMIC DNA]</scope>
    <source>
        <strain>YCH46</strain>
    </source>
</reference>
<name>ISTB_BACFR</name>
<gene>
    <name type="primary">tnpB</name>
    <name type="ordered locus">BF4240</name>
</gene>
<comment type="similarity">
    <text evidence="2">Belongs to the IS21/IS1162 putative ATP-binding protein family.</text>
</comment>
<organism>
    <name type="scientific">Bacteroides fragilis (strain YCH46)</name>
    <dbReference type="NCBI Taxonomy" id="295405"/>
    <lineage>
        <taxon>Bacteria</taxon>
        <taxon>Pseudomonadati</taxon>
        <taxon>Bacteroidota</taxon>
        <taxon>Bacteroidia</taxon>
        <taxon>Bacteroidales</taxon>
        <taxon>Bacteroidaceae</taxon>
        <taxon>Bacteroides</taxon>
    </lineage>
</organism>
<accession>Q64NF1</accession>
<protein>
    <recommendedName>
        <fullName>Insertion sequence IS21-like putative ATP-binding protein</fullName>
    </recommendedName>
</protein>
<dbReference type="EMBL" id="AP006841">
    <property type="protein sequence ID" value="BAD50982.1"/>
    <property type="molecule type" value="Genomic_DNA"/>
</dbReference>
<dbReference type="RefSeq" id="YP_101516.1">
    <property type="nucleotide sequence ID" value="NC_006347.1"/>
</dbReference>
<dbReference type="SMR" id="Q64NF1"/>
<dbReference type="STRING" id="295405.BF4240"/>
<dbReference type="KEGG" id="bfr:BF4240"/>
<dbReference type="PATRIC" id="fig|295405.11.peg.4090"/>
<dbReference type="HOGENOM" id="CLU_062999_1_2_10"/>
<dbReference type="OrthoDB" id="8064373at2"/>
<dbReference type="Proteomes" id="UP000002197">
    <property type="component" value="Chromosome"/>
</dbReference>
<dbReference type="GO" id="GO:0005524">
    <property type="term" value="F:ATP binding"/>
    <property type="evidence" value="ECO:0007669"/>
    <property type="project" value="UniProtKB-KW"/>
</dbReference>
<dbReference type="GO" id="GO:0006260">
    <property type="term" value="P:DNA replication"/>
    <property type="evidence" value="ECO:0007669"/>
    <property type="project" value="TreeGrafter"/>
</dbReference>
<dbReference type="CDD" id="cd00009">
    <property type="entry name" value="AAA"/>
    <property type="match status" value="1"/>
</dbReference>
<dbReference type="Gene3D" id="3.40.50.300">
    <property type="entry name" value="P-loop containing nucleotide triphosphate hydrolases"/>
    <property type="match status" value="1"/>
</dbReference>
<dbReference type="InterPro" id="IPR002611">
    <property type="entry name" value="IstB_ATP-bd"/>
</dbReference>
<dbReference type="InterPro" id="IPR027417">
    <property type="entry name" value="P-loop_NTPase"/>
</dbReference>
<dbReference type="InterPro" id="IPR025662">
    <property type="entry name" value="Sigma_54_int_dom_ATP-bd_1"/>
</dbReference>
<dbReference type="PANTHER" id="PTHR30050:SF4">
    <property type="entry name" value="ATP-BINDING PROTEIN RV3427C IN INSERTION SEQUENCE-RELATED"/>
    <property type="match status" value="1"/>
</dbReference>
<dbReference type="PANTHER" id="PTHR30050">
    <property type="entry name" value="CHROMOSOMAL REPLICATION INITIATOR PROTEIN DNAA"/>
    <property type="match status" value="1"/>
</dbReference>
<dbReference type="Pfam" id="PF01695">
    <property type="entry name" value="IstB_IS21"/>
    <property type="match status" value="1"/>
</dbReference>
<dbReference type="SUPFAM" id="SSF52540">
    <property type="entry name" value="P-loop containing nucleoside triphosphate hydrolases"/>
    <property type="match status" value="1"/>
</dbReference>
<proteinExistence type="inferred from homology"/>
<sequence>MKSLETMARYKKELTECARNLKLPFLAEHLDEILHEAQEKQQTYSEFLSTCLMRELRDKERRSYLTRLKFAGLPARYDLDLYDFSRTEGIDQRQMRELRELVWIRRTYNLLLVGDSGTGKTFIASGLIHEAVKAGYKAYLLTLEELFVCLKTKEISRPAMKTYKRIMKAQLLAIDDVTLFPLKGEDVLLLFKLVNCVQG</sequence>
<feature type="chain" id="PRO_0000075475" description="Insertion sequence IS21-like putative ATP-binding protein">
    <location>
        <begin position="1"/>
        <end position="199"/>
    </location>
</feature>
<feature type="binding site" evidence="1">
    <location>
        <begin position="114"/>
        <end position="121"/>
    </location>
    <ligand>
        <name>ATP</name>
        <dbReference type="ChEBI" id="CHEBI:30616"/>
    </ligand>
</feature>